<gene>
    <name type="primary">Mxra7</name>
</gene>
<sequence>MESPVELLAALPALVTALALLLAWLLLRRGAARVPAPESTASDEAPGAPAPPEPPESCAPEPAPEGPSQSERVAEPEESEAEEPAAEGRQDEDSDSEMGPPTEEPEEEDGAAFSFKYSPGQLRGSQYKKMMTKEELEEEHRVQKEQLAAIFKLMKDNKDTFGEMSDGDMQEQLRLYDM</sequence>
<organism>
    <name type="scientific">Mus musculus</name>
    <name type="common">Mouse</name>
    <dbReference type="NCBI Taxonomy" id="10090"/>
    <lineage>
        <taxon>Eukaryota</taxon>
        <taxon>Metazoa</taxon>
        <taxon>Chordata</taxon>
        <taxon>Craniata</taxon>
        <taxon>Vertebrata</taxon>
        <taxon>Euteleostomi</taxon>
        <taxon>Mammalia</taxon>
        <taxon>Eutheria</taxon>
        <taxon>Euarchontoglires</taxon>
        <taxon>Glires</taxon>
        <taxon>Rodentia</taxon>
        <taxon>Myomorpha</taxon>
        <taxon>Muroidea</taxon>
        <taxon>Muridae</taxon>
        <taxon>Murinae</taxon>
        <taxon>Mus</taxon>
        <taxon>Mus</taxon>
    </lineage>
</organism>
<reference key="1">
    <citation type="journal article" date="2005" name="Science">
        <title>The transcriptional landscape of the mammalian genome.</title>
        <authorList>
            <person name="Carninci P."/>
            <person name="Kasukawa T."/>
            <person name="Katayama S."/>
            <person name="Gough J."/>
            <person name="Frith M.C."/>
            <person name="Maeda N."/>
            <person name="Oyama R."/>
            <person name="Ravasi T."/>
            <person name="Lenhard B."/>
            <person name="Wells C."/>
            <person name="Kodzius R."/>
            <person name="Shimokawa K."/>
            <person name="Bajic V.B."/>
            <person name="Brenner S.E."/>
            <person name="Batalov S."/>
            <person name="Forrest A.R."/>
            <person name="Zavolan M."/>
            <person name="Davis M.J."/>
            <person name="Wilming L.G."/>
            <person name="Aidinis V."/>
            <person name="Allen J.E."/>
            <person name="Ambesi-Impiombato A."/>
            <person name="Apweiler R."/>
            <person name="Aturaliya R.N."/>
            <person name="Bailey T.L."/>
            <person name="Bansal M."/>
            <person name="Baxter L."/>
            <person name="Beisel K.W."/>
            <person name="Bersano T."/>
            <person name="Bono H."/>
            <person name="Chalk A.M."/>
            <person name="Chiu K.P."/>
            <person name="Choudhary V."/>
            <person name="Christoffels A."/>
            <person name="Clutterbuck D.R."/>
            <person name="Crowe M.L."/>
            <person name="Dalla E."/>
            <person name="Dalrymple B.P."/>
            <person name="de Bono B."/>
            <person name="Della Gatta G."/>
            <person name="di Bernardo D."/>
            <person name="Down T."/>
            <person name="Engstrom P."/>
            <person name="Fagiolini M."/>
            <person name="Faulkner G."/>
            <person name="Fletcher C.F."/>
            <person name="Fukushima T."/>
            <person name="Furuno M."/>
            <person name="Futaki S."/>
            <person name="Gariboldi M."/>
            <person name="Georgii-Hemming P."/>
            <person name="Gingeras T.R."/>
            <person name="Gojobori T."/>
            <person name="Green R.E."/>
            <person name="Gustincich S."/>
            <person name="Harbers M."/>
            <person name="Hayashi Y."/>
            <person name="Hensch T.K."/>
            <person name="Hirokawa N."/>
            <person name="Hill D."/>
            <person name="Huminiecki L."/>
            <person name="Iacono M."/>
            <person name="Ikeo K."/>
            <person name="Iwama A."/>
            <person name="Ishikawa T."/>
            <person name="Jakt M."/>
            <person name="Kanapin A."/>
            <person name="Katoh M."/>
            <person name="Kawasawa Y."/>
            <person name="Kelso J."/>
            <person name="Kitamura H."/>
            <person name="Kitano H."/>
            <person name="Kollias G."/>
            <person name="Krishnan S.P."/>
            <person name="Kruger A."/>
            <person name="Kummerfeld S.K."/>
            <person name="Kurochkin I.V."/>
            <person name="Lareau L.F."/>
            <person name="Lazarevic D."/>
            <person name="Lipovich L."/>
            <person name="Liu J."/>
            <person name="Liuni S."/>
            <person name="McWilliam S."/>
            <person name="Madan Babu M."/>
            <person name="Madera M."/>
            <person name="Marchionni L."/>
            <person name="Matsuda H."/>
            <person name="Matsuzawa S."/>
            <person name="Miki H."/>
            <person name="Mignone F."/>
            <person name="Miyake S."/>
            <person name="Morris K."/>
            <person name="Mottagui-Tabar S."/>
            <person name="Mulder N."/>
            <person name="Nakano N."/>
            <person name="Nakauchi H."/>
            <person name="Ng P."/>
            <person name="Nilsson R."/>
            <person name="Nishiguchi S."/>
            <person name="Nishikawa S."/>
            <person name="Nori F."/>
            <person name="Ohara O."/>
            <person name="Okazaki Y."/>
            <person name="Orlando V."/>
            <person name="Pang K.C."/>
            <person name="Pavan W.J."/>
            <person name="Pavesi G."/>
            <person name="Pesole G."/>
            <person name="Petrovsky N."/>
            <person name="Piazza S."/>
            <person name="Reed J."/>
            <person name="Reid J.F."/>
            <person name="Ring B.Z."/>
            <person name="Ringwald M."/>
            <person name="Rost B."/>
            <person name="Ruan Y."/>
            <person name="Salzberg S.L."/>
            <person name="Sandelin A."/>
            <person name="Schneider C."/>
            <person name="Schoenbach C."/>
            <person name="Sekiguchi K."/>
            <person name="Semple C.A."/>
            <person name="Seno S."/>
            <person name="Sessa L."/>
            <person name="Sheng Y."/>
            <person name="Shibata Y."/>
            <person name="Shimada H."/>
            <person name="Shimada K."/>
            <person name="Silva D."/>
            <person name="Sinclair B."/>
            <person name="Sperling S."/>
            <person name="Stupka E."/>
            <person name="Sugiura K."/>
            <person name="Sultana R."/>
            <person name="Takenaka Y."/>
            <person name="Taki K."/>
            <person name="Tammoja K."/>
            <person name="Tan S.L."/>
            <person name="Tang S."/>
            <person name="Taylor M.S."/>
            <person name="Tegner J."/>
            <person name="Teichmann S.A."/>
            <person name="Ueda H.R."/>
            <person name="van Nimwegen E."/>
            <person name="Verardo R."/>
            <person name="Wei C.L."/>
            <person name="Yagi K."/>
            <person name="Yamanishi H."/>
            <person name="Zabarovsky E."/>
            <person name="Zhu S."/>
            <person name="Zimmer A."/>
            <person name="Hide W."/>
            <person name="Bult C."/>
            <person name="Grimmond S.M."/>
            <person name="Teasdale R.D."/>
            <person name="Liu E.T."/>
            <person name="Brusic V."/>
            <person name="Quackenbush J."/>
            <person name="Wahlestedt C."/>
            <person name="Mattick J.S."/>
            <person name="Hume D.A."/>
            <person name="Kai C."/>
            <person name="Sasaki D."/>
            <person name="Tomaru Y."/>
            <person name="Fukuda S."/>
            <person name="Kanamori-Katayama M."/>
            <person name="Suzuki M."/>
            <person name="Aoki J."/>
            <person name="Arakawa T."/>
            <person name="Iida J."/>
            <person name="Imamura K."/>
            <person name="Itoh M."/>
            <person name="Kato T."/>
            <person name="Kawaji H."/>
            <person name="Kawagashira N."/>
            <person name="Kawashima T."/>
            <person name="Kojima M."/>
            <person name="Kondo S."/>
            <person name="Konno H."/>
            <person name="Nakano K."/>
            <person name="Ninomiya N."/>
            <person name="Nishio T."/>
            <person name="Okada M."/>
            <person name="Plessy C."/>
            <person name="Shibata K."/>
            <person name="Shiraki T."/>
            <person name="Suzuki S."/>
            <person name="Tagami M."/>
            <person name="Waki K."/>
            <person name="Watahiki A."/>
            <person name="Okamura-Oho Y."/>
            <person name="Suzuki H."/>
            <person name="Kawai J."/>
            <person name="Hayashizaki Y."/>
        </authorList>
    </citation>
    <scope>NUCLEOTIDE SEQUENCE [LARGE SCALE MRNA]</scope>
    <source>
        <strain>C57BL/6J</strain>
        <tissue>Pancreas</tissue>
    </source>
</reference>
<reference key="2">
    <citation type="journal article" date="2009" name="PLoS Biol.">
        <title>Lineage-specific biology revealed by a finished genome assembly of the mouse.</title>
        <authorList>
            <person name="Church D.M."/>
            <person name="Goodstadt L."/>
            <person name="Hillier L.W."/>
            <person name="Zody M.C."/>
            <person name="Goldstein S."/>
            <person name="She X."/>
            <person name="Bult C.J."/>
            <person name="Agarwala R."/>
            <person name="Cherry J.L."/>
            <person name="DiCuccio M."/>
            <person name="Hlavina W."/>
            <person name="Kapustin Y."/>
            <person name="Meric P."/>
            <person name="Maglott D."/>
            <person name="Birtle Z."/>
            <person name="Marques A.C."/>
            <person name="Graves T."/>
            <person name="Zhou S."/>
            <person name="Teague B."/>
            <person name="Potamousis K."/>
            <person name="Churas C."/>
            <person name="Place M."/>
            <person name="Herschleb J."/>
            <person name="Runnheim R."/>
            <person name="Forrest D."/>
            <person name="Amos-Landgraf J."/>
            <person name="Schwartz D.C."/>
            <person name="Cheng Z."/>
            <person name="Lindblad-Toh K."/>
            <person name="Eichler E.E."/>
            <person name="Ponting C.P."/>
        </authorList>
    </citation>
    <scope>NUCLEOTIDE SEQUENCE [LARGE SCALE GENOMIC DNA]</scope>
    <source>
        <strain>C57BL/6J</strain>
    </source>
</reference>
<reference key="3">
    <citation type="journal article" date="2004" name="Genome Res.">
        <title>The status, quality, and expansion of the NIH full-length cDNA project: the Mammalian Gene Collection (MGC).</title>
        <authorList>
            <consortium name="The MGC Project Team"/>
        </authorList>
    </citation>
    <scope>NUCLEOTIDE SEQUENCE [LARGE SCALE MRNA]</scope>
    <source>
        <tissue>Brain</tissue>
    </source>
</reference>
<reference key="4">
    <citation type="journal article" date="2004" name="Mol. Cell. Proteomics">
        <title>Phosphoproteomic analysis of the developing mouse brain.</title>
        <authorList>
            <person name="Ballif B.A."/>
            <person name="Villen J."/>
            <person name="Beausoleil S.A."/>
            <person name="Schwartz D."/>
            <person name="Gygi S.P."/>
        </authorList>
    </citation>
    <scope>PHOSPHORYLATION [LARGE SCALE ANALYSIS] AT SER-79</scope>
    <scope>IDENTIFICATION BY MASS SPECTROMETRY [LARGE SCALE ANALYSIS]</scope>
    <source>
        <tissue>Embryonic brain</tissue>
    </source>
</reference>
<reference key="5">
    <citation type="journal article" date="2007" name="Mol. Cell. Proteomics">
        <title>Qualitative and quantitative analyses of protein phosphorylation in naive and stimulated mouse synaptosomal preparations.</title>
        <authorList>
            <person name="Munton R.P."/>
            <person name="Tweedie-Cullen R."/>
            <person name="Livingstone-Zatchej M."/>
            <person name="Weinandy F."/>
            <person name="Waidelich M."/>
            <person name="Longo D."/>
            <person name="Gehrig P."/>
            <person name="Potthast F."/>
            <person name="Rutishauser D."/>
            <person name="Gerrits B."/>
            <person name="Panse C."/>
            <person name="Schlapbach R."/>
            <person name="Mansuy I.M."/>
        </authorList>
    </citation>
    <scope>IDENTIFICATION BY MASS SPECTROMETRY [LARGE SCALE ANALYSIS]</scope>
    <source>
        <tissue>Brain cortex</tissue>
    </source>
</reference>
<reference key="6">
    <citation type="journal article" date="2007" name="Proc. Natl. Acad. Sci. U.S.A.">
        <title>Large-scale phosphorylation analysis of mouse liver.</title>
        <authorList>
            <person name="Villen J."/>
            <person name="Beausoleil S.A."/>
            <person name="Gerber S.A."/>
            <person name="Gygi S.P."/>
        </authorList>
    </citation>
    <scope>PHOSPHORYLATION [LARGE SCALE ANALYSIS] AT SER-79</scope>
    <scope>IDENTIFICATION BY MASS SPECTROMETRY [LARGE SCALE ANALYSIS]</scope>
    <source>
        <tissue>Liver</tissue>
    </source>
</reference>
<reference key="7">
    <citation type="journal article" date="2008" name="J. Proteome Res.">
        <title>Specific phosphopeptide enrichment with immobilized titanium ion affinity chromatography adsorbent for phosphoproteome analysis.</title>
        <authorList>
            <person name="Zhou H."/>
            <person name="Ye M."/>
            <person name="Dong J."/>
            <person name="Han G."/>
            <person name="Jiang X."/>
            <person name="Wu R."/>
            <person name="Zou H."/>
        </authorList>
    </citation>
    <scope>IDENTIFICATION BY MASS SPECTROMETRY [LARGE SCALE ANALYSIS]</scope>
    <source>
        <tissue>Liver</tissue>
    </source>
</reference>
<reference key="8">
    <citation type="journal article" date="2010" name="Cell">
        <title>A tissue-specific atlas of mouse protein phosphorylation and expression.</title>
        <authorList>
            <person name="Huttlin E.L."/>
            <person name="Jedrychowski M.P."/>
            <person name="Elias J.E."/>
            <person name="Goswami T."/>
            <person name="Rad R."/>
            <person name="Beausoleil S.A."/>
            <person name="Villen J."/>
            <person name="Haas W."/>
            <person name="Sowa M.E."/>
            <person name="Gygi S.P."/>
        </authorList>
    </citation>
    <scope>PHOSPHORYLATION [LARGE SCALE ANALYSIS] AT SER-79 AND SER-165</scope>
    <scope>IDENTIFICATION BY MASS SPECTROMETRY [LARGE SCALE ANALYSIS]</scope>
    <source>
        <tissue>Brain</tissue>
        <tissue>Brown adipose tissue</tissue>
        <tissue>Heart</tissue>
        <tissue>Kidney</tissue>
        <tissue>Lung</tissue>
        <tissue>Pancreas</tissue>
        <tissue>Spleen</tissue>
        <tissue>Testis</tissue>
    </source>
</reference>
<feature type="chain" id="PRO_0000239449" description="Matrix-remodeling-associated protein 7">
    <location>
        <begin position="1"/>
        <end position="178"/>
    </location>
</feature>
<feature type="transmembrane region" description="Helical" evidence="1">
    <location>
        <begin position="7"/>
        <end position="27"/>
    </location>
</feature>
<feature type="region of interest" description="Disordered" evidence="2">
    <location>
        <begin position="33"/>
        <end position="121"/>
    </location>
</feature>
<feature type="compositionally biased region" description="Pro residues" evidence="2">
    <location>
        <begin position="48"/>
        <end position="65"/>
    </location>
</feature>
<feature type="compositionally biased region" description="Acidic residues" evidence="2">
    <location>
        <begin position="76"/>
        <end position="85"/>
    </location>
</feature>
<feature type="modified residue" description="Phosphoserine" evidence="4 5 6">
    <location>
        <position position="79"/>
    </location>
</feature>
<feature type="modified residue" description="Phosphoserine" evidence="6">
    <location>
        <position position="165"/>
    </location>
</feature>
<feature type="sequence conflict" description="In Ref. 1; BAB28347." evidence="3" ref="1">
    <original>EP</original>
    <variation>DA</variation>
    <location>
        <begin position="75"/>
        <end position="76"/>
    </location>
</feature>
<proteinExistence type="evidence at protein level"/>
<comment type="subcellular location">
    <subcellularLocation>
        <location evidence="3">Membrane</location>
        <topology evidence="3">Single-pass membrane protein</topology>
    </subcellularLocation>
</comment>
<dbReference type="EMBL" id="AK012601">
    <property type="protein sequence ID" value="BAB28347.1"/>
    <property type="molecule type" value="mRNA"/>
</dbReference>
<dbReference type="EMBL" id="AK075801">
    <property type="protein sequence ID" value="BAC35969.1"/>
    <property type="molecule type" value="mRNA"/>
</dbReference>
<dbReference type="EMBL" id="AL645542">
    <property type="status" value="NOT_ANNOTATED_CDS"/>
    <property type="molecule type" value="Genomic_DNA"/>
</dbReference>
<dbReference type="EMBL" id="BC147320">
    <property type="protein sequence ID" value="AAI47321.1"/>
    <property type="molecule type" value="mRNA"/>
</dbReference>
<dbReference type="EMBL" id="BC147321">
    <property type="protein sequence ID" value="AAI47322.1"/>
    <property type="molecule type" value="mRNA"/>
</dbReference>
<dbReference type="CCDS" id="CCDS25677.1"/>
<dbReference type="RefSeq" id="NP_080556.1">
    <property type="nucleotide sequence ID" value="NM_026280.3"/>
</dbReference>
<dbReference type="SMR" id="Q9CZH7"/>
<dbReference type="BioGRID" id="212317">
    <property type="interactions" value="2"/>
</dbReference>
<dbReference type="FunCoup" id="Q9CZH7">
    <property type="interactions" value="114"/>
</dbReference>
<dbReference type="STRING" id="10090.ENSMUSP00000021170"/>
<dbReference type="iPTMnet" id="Q9CZH7"/>
<dbReference type="PhosphoSitePlus" id="Q9CZH7"/>
<dbReference type="jPOST" id="Q9CZH7"/>
<dbReference type="PaxDb" id="10090-ENSMUSP00000021170"/>
<dbReference type="PeptideAtlas" id="Q9CZH7"/>
<dbReference type="ProteomicsDB" id="286090"/>
<dbReference type="Pumba" id="Q9CZH7"/>
<dbReference type="TopDownProteomics" id="Q9CZH7"/>
<dbReference type="DNASU" id="67622"/>
<dbReference type="Ensembl" id="ENSMUST00000021170.9">
    <property type="protein sequence ID" value="ENSMUSP00000021170.3"/>
    <property type="gene ID" value="ENSMUSG00000020814.14"/>
</dbReference>
<dbReference type="GeneID" id="67622"/>
<dbReference type="KEGG" id="mmu:67622"/>
<dbReference type="UCSC" id="uc007mmf.2">
    <property type="organism name" value="mouse"/>
</dbReference>
<dbReference type="AGR" id="MGI:1914872"/>
<dbReference type="CTD" id="439921"/>
<dbReference type="MGI" id="MGI:1914872">
    <property type="gene designation" value="Mxra7"/>
</dbReference>
<dbReference type="VEuPathDB" id="HostDB:ENSMUSG00000020814"/>
<dbReference type="eggNOG" id="ENOG502SAE0">
    <property type="taxonomic scope" value="Eukaryota"/>
</dbReference>
<dbReference type="GeneTree" id="ENSGT00940000163380"/>
<dbReference type="HOGENOM" id="CLU_117235_0_0_1"/>
<dbReference type="InParanoid" id="Q9CZH7"/>
<dbReference type="OMA" id="NGERPFF"/>
<dbReference type="OrthoDB" id="5983600at2759"/>
<dbReference type="PhylomeDB" id="Q9CZH7"/>
<dbReference type="TreeFam" id="TF336065"/>
<dbReference type="BioGRID-ORCS" id="67622">
    <property type="hits" value="3 hits in 79 CRISPR screens"/>
</dbReference>
<dbReference type="ChiTaRS" id="Mxra7">
    <property type="organism name" value="mouse"/>
</dbReference>
<dbReference type="PRO" id="PR:Q9CZH7"/>
<dbReference type="Proteomes" id="UP000000589">
    <property type="component" value="Chromosome 11"/>
</dbReference>
<dbReference type="RNAct" id="Q9CZH7">
    <property type="molecule type" value="protein"/>
</dbReference>
<dbReference type="Bgee" id="ENSMUSG00000020814">
    <property type="expression patterns" value="Expressed in retinal neural layer and 171 other cell types or tissues"/>
</dbReference>
<dbReference type="ExpressionAtlas" id="Q9CZH7">
    <property type="expression patterns" value="baseline and differential"/>
</dbReference>
<dbReference type="GO" id="GO:0016020">
    <property type="term" value="C:membrane"/>
    <property type="evidence" value="ECO:0007669"/>
    <property type="project" value="UniProtKB-SubCell"/>
</dbReference>
<dbReference type="InterPro" id="IPR026622">
    <property type="entry name" value="Mxra7"/>
</dbReference>
<dbReference type="PANTHER" id="PTHR21845:SF2">
    <property type="entry name" value="MATRIX-REMODELING-ASSOCIATED PROTEIN 7"/>
    <property type="match status" value="1"/>
</dbReference>
<dbReference type="PANTHER" id="PTHR21845">
    <property type="entry name" value="TRANSMEMBRANE ANCHOR PROTEIN 1"/>
    <property type="match status" value="1"/>
</dbReference>
<dbReference type="Pfam" id="PF25473">
    <property type="entry name" value="MXRA7_helical"/>
    <property type="match status" value="1"/>
</dbReference>
<name>MXRA7_MOUSE</name>
<keyword id="KW-0472">Membrane</keyword>
<keyword id="KW-0597">Phosphoprotein</keyword>
<keyword id="KW-1185">Reference proteome</keyword>
<keyword id="KW-0812">Transmembrane</keyword>
<keyword id="KW-1133">Transmembrane helix</keyword>
<accession>Q9CZH7</accession>
<accession>A2AA24</accession>
<accession>B2RVR9</accession>
<accession>Q8C6F8</accession>
<protein>
    <recommendedName>
        <fullName>Matrix-remodeling-associated protein 7</fullName>
    </recommendedName>
</protein>
<evidence type="ECO:0000255" key="1"/>
<evidence type="ECO:0000256" key="2">
    <source>
        <dbReference type="SAM" id="MobiDB-lite"/>
    </source>
</evidence>
<evidence type="ECO:0000305" key="3"/>
<evidence type="ECO:0007744" key="4">
    <source>
    </source>
</evidence>
<evidence type="ECO:0007744" key="5">
    <source>
    </source>
</evidence>
<evidence type="ECO:0007744" key="6">
    <source>
    </source>
</evidence>